<keyword id="KW-0963">Cytoplasm</keyword>
<keyword id="KW-0378">Hydrolase</keyword>
<keyword id="KW-0694">RNA-binding</keyword>
<keyword id="KW-0820">tRNA-binding</keyword>
<name>DTD_PSEPW</name>
<evidence type="ECO:0000255" key="1">
    <source>
        <dbReference type="HAMAP-Rule" id="MF_00518"/>
    </source>
</evidence>
<dbReference type="EC" id="3.1.1.96" evidence="1"/>
<dbReference type="EMBL" id="CP000949">
    <property type="protein sequence ID" value="ACA70943.1"/>
    <property type="molecule type" value="Genomic_DNA"/>
</dbReference>
<dbReference type="SMR" id="B1J2R2"/>
<dbReference type="STRING" id="390235.PputW619_0438"/>
<dbReference type="KEGG" id="ppw:PputW619_0438"/>
<dbReference type="eggNOG" id="COG1490">
    <property type="taxonomic scope" value="Bacteria"/>
</dbReference>
<dbReference type="HOGENOM" id="CLU_076901_1_1_6"/>
<dbReference type="OrthoDB" id="9801395at2"/>
<dbReference type="GO" id="GO:0005737">
    <property type="term" value="C:cytoplasm"/>
    <property type="evidence" value="ECO:0007669"/>
    <property type="project" value="UniProtKB-SubCell"/>
</dbReference>
<dbReference type="GO" id="GO:0051500">
    <property type="term" value="F:D-tyrosyl-tRNA(Tyr) deacylase activity"/>
    <property type="evidence" value="ECO:0007669"/>
    <property type="project" value="TreeGrafter"/>
</dbReference>
<dbReference type="GO" id="GO:0106026">
    <property type="term" value="F:Gly-tRNA(Ala) deacylase activity"/>
    <property type="evidence" value="ECO:0007669"/>
    <property type="project" value="UniProtKB-UniRule"/>
</dbReference>
<dbReference type="GO" id="GO:0043908">
    <property type="term" value="F:Ser(Gly)-tRNA(Ala) hydrolase activity"/>
    <property type="evidence" value="ECO:0007669"/>
    <property type="project" value="UniProtKB-UniRule"/>
</dbReference>
<dbReference type="GO" id="GO:0000049">
    <property type="term" value="F:tRNA binding"/>
    <property type="evidence" value="ECO:0007669"/>
    <property type="project" value="UniProtKB-UniRule"/>
</dbReference>
<dbReference type="GO" id="GO:0019478">
    <property type="term" value="P:D-amino acid catabolic process"/>
    <property type="evidence" value="ECO:0007669"/>
    <property type="project" value="UniProtKB-UniRule"/>
</dbReference>
<dbReference type="CDD" id="cd00563">
    <property type="entry name" value="Dtyr_deacylase"/>
    <property type="match status" value="1"/>
</dbReference>
<dbReference type="FunFam" id="3.50.80.10:FF:000001">
    <property type="entry name" value="D-aminoacyl-tRNA deacylase"/>
    <property type="match status" value="1"/>
</dbReference>
<dbReference type="Gene3D" id="3.50.80.10">
    <property type="entry name" value="D-tyrosyl-tRNA(Tyr) deacylase"/>
    <property type="match status" value="1"/>
</dbReference>
<dbReference type="HAMAP" id="MF_00518">
    <property type="entry name" value="Deacylase_Dtd"/>
    <property type="match status" value="1"/>
</dbReference>
<dbReference type="InterPro" id="IPR003732">
    <property type="entry name" value="Daa-tRNA_deacyls_DTD"/>
</dbReference>
<dbReference type="InterPro" id="IPR023509">
    <property type="entry name" value="DTD-like_sf"/>
</dbReference>
<dbReference type="NCBIfam" id="TIGR00256">
    <property type="entry name" value="D-aminoacyl-tRNA deacylase"/>
    <property type="match status" value="1"/>
</dbReference>
<dbReference type="PANTHER" id="PTHR10472:SF5">
    <property type="entry name" value="D-AMINOACYL-TRNA DEACYLASE 1"/>
    <property type="match status" value="1"/>
</dbReference>
<dbReference type="PANTHER" id="PTHR10472">
    <property type="entry name" value="D-TYROSYL-TRNA TYR DEACYLASE"/>
    <property type="match status" value="1"/>
</dbReference>
<dbReference type="Pfam" id="PF02580">
    <property type="entry name" value="Tyr_Deacylase"/>
    <property type="match status" value="1"/>
</dbReference>
<dbReference type="SUPFAM" id="SSF69500">
    <property type="entry name" value="DTD-like"/>
    <property type="match status" value="1"/>
</dbReference>
<sequence>MKGLLQRVRGARVEVAGEIVGAIDQGLLVLVAVEPEDTREQADKLLHKLLNYRVFSDEQGKMNLSLKDVGGGLLLVSQFTLAADTRSGMRPSFSTAAPPALGAELFDYLLQQAQGQHADVASGRFGADMQVHLVNDGPVTFLLQI</sequence>
<organism>
    <name type="scientific">Pseudomonas putida (strain W619)</name>
    <dbReference type="NCBI Taxonomy" id="390235"/>
    <lineage>
        <taxon>Bacteria</taxon>
        <taxon>Pseudomonadati</taxon>
        <taxon>Pseudomonadota</taxon>
        <taxon>Gammaproteobacteria</taxon>
        <taxon>Pseudomonadales</taxon>
        <taxon>Pseudomonadaceae</taxon>
        <taxon>Pseudomonas</taxon>
    </lineage>
</organism>
<proteinExistence type="inferred from homology"/>
<feature type="chain" id="PRO_1000127561" description="D-aminoacyl-tRNA deacylase">
    <location>
        <begin position="1"/>
        <end position="145"/>
    </location>
</feature>
<feature type="short sequence motif" description="Gly-cisPro motif, important for rejection of L-amino acids" evidence="1">
    <location>
        <begin position="137"/>
        <end position="138"/>
    </location>
</feature>
<comment type="function">
    <text evidence="1">An aminoacyl-tRNA editing enzyme that deacylates mischarged D-aminoacyl-tRNAs. Also deacylates mischarged glycyl-tRNA(Ala), protecting cells against glycine mischarging by AlaRS. Acts via tRNA-based rather than protein-based catalysis; rejects L-amino acids rather than detecting D-amino acids in the active site. By recycling D-aminoacyl-tRNA to D-amino acids and free tRNA molecules, this enzyme counteracts the toxicity associated with the formation of D-aminoacyl-tRNA entities in vivo and helps enforce protein L-homochirality.</text>
</comment>
<comment type="catalytic activity">
    <reaction evidence="1">
        <text>glycyl-tRNA(Ala) + H2O = tRNA(Ala) + glycine + H(+)</text>
        <dbReference type="Rhea" id="RHEA:53744"/>
        <dbReference type="Rhea" id="RHEA-COMP:9657"/>
        <dbReference type="Rhea" id="RHEA-COMP:13640"/>
        <dbReference type="ChEBI" id="CHEBI:15377"/>
        <dbReference type="ChEBI" id="CHEBI:15378"/>
        <dbReference type="ChEBI" id="CHEBI:57305"/>
        <dbReference type="ChEBI" id="CHEBI:78442"/>
        <dbReference type="ChEBI" id="CHEBI:78522"/>
        <dbReference type="EC" id="3.1.1.96"/>
    </reaction>
</comment>
<comment type="catalytic activity">
    <reaction evidence="1">
        <text>a D-aminoacyl-tRNA + H2O = a tRNA + a D-alpha-amino acid + H(+)</text>
        <dbReference type="Rhea" id="RHEA:13953"/>
        <dbReference type="Rhea" id="RHEA-COMP:10123"/>
        <dbReference type="Rhea" id="RHEA-COMP:10124"/>
        <dbReference type="ChEBI" id="CHEBI:15377"/>
        <dbReference type="ChEBI" id="CHEBI:15378"/>
        <dbReference type="ChEBI" id="CHEBI:59871"/>
        <dbReference type="ChEBI" id="CHEBI:78442"/>
        <dbReference type="ChEBI" id="CHEBI:79333"/>
        <dbReference type="EC" id="3.1.1.96"/>
    </reaction>
</comment>
<comment type="subunit">
    <text evidence="1">Homodimer.</text>
</comment>
<comment type="subcellular location">
    <subcellularLocation>
        <location evidence="1">Cytoplasm</location>
    </subcellularLocation>
</comment>
<comment type="domain">
    <text evidence="1">A Gly-cisPro motif from one monomer fits into the active site of the other monomer to allow specific chiral rejection of L-amino acids.</text>
</comment>
<comment type="similarity">
    <text evidence="1">Belongs to the DTD family.</text>
</comment>
<reference key="1">
    <citation type="submission" date="2008-02" db="EMBL/GenBank/DDBJ databases">
        <title>Complete sequence of Pseudomonas putida W619.</title>
        <authorList>
            <person name="Copeland A."/>
            <person name="Lucas S."/>
            <person name="Lapidus A."/>
            <person name="Barry K."/>
            <person name="Detter J.C."/>
            <person name="Glavina del Rio T."/>
            <person name="Dalin E."/>
            <person name="Tice H."/>
            <person name="Pitluck S."/>
            <person name="Chain P."/>
            <person name="Malfatti S."/>
            <person name="Shin M."/>
            <person name="Vergez L."/>
            <person name="Schmutz J."/>
            <person name="Larimer F."/>
            <person name="Land M."/>
            <person name="Hauser L."/>
            <person name="Kyrpides N."/>
            <person name="Kim E."/>
            <person name="Taghavi S."/>
            <person name="Vangronsveld D."/>
            <person name="van der Lelie D."/>
            <person name="Richardson P."/>
        </authorList>
    </citation>
    <scope>NUCLEOTIDE SEQUENCE [LARGE SCALE GENOMIC DNA]</scope>
    <source>
        <strain>W619</strain>
    </source>
</reference>
<gene>
    <name evidence="1" type="primary">dtd</name>
    <name type="ordered locus">PputW619_0438</name>
</gene>
<accession>B1J2R2</accession>
<protein>
    <recommendedName>
        <fullName evidence="1">D-aminoacyl-tRNA deacylase</fullName>
        <shortName evidence="1">DTD</shortName>
        <ecNumber evidence="1">3.1.1.96</ecNumber>
    </recommendedName>
    <alternativeName>
        <fullName evidence="1">Gly-tRNA(Ala) deacylase</fullName>
    </alternativeName>
</protein>